<keyword id="KW-0997">Cell inner membrane</keyword>
<keyword id="KW-1003">Cell membrane</keyword>
<keyword id="KW-0472">Membrane</keyword>
<keyword id="KW-0812">Transmembrane</keyword>
<keyword id="KW-1133">Transmembrane helix</keyword>
<comment type="subcellular location">
    <subcellularLocation>
        <location evidence="1">Cell inner membrane</location>
        <topology evidence="1">Multi-pass membrane protein</topology>
    </subcellularLocation>
</comment>
<comment type="similarity">
    <text evidence="1">Belongs to the universal stress protein B family.</text>
</comment>
<sequence>MISTVALFWALCVVCIVNMARYFSSLRALLVVLRNCDPLLYQYVDGGGFFTSHGQPNKQVRLVWYIYAQRYRDHHDDEFIRRCERVRRQFILTSALCGLVVVSLIALMIWH</sequence>
<name>USPB_ECO81</name>
<organism>
    <name type="scientific">Escherichia coli O81 (strain ED1a)</name>
    <dbReference type="NCBI Taxonomy" id="585397"/>
    <lineage>
        <taxon>Bacteria</taxon>
        <taxon>Pseudomonadati</taxon>
        <taxon>Pseudomonadota</taxon>
        <taxon>Gammaproteobacteria</taxon>
        <taxon>Enterobacterales</taxon>
        <taxon>Enterobacteriaceae</taxon>
        <taxon>Escherichia</taxon>
    </lineage>
</organism>
<accession>B7N1S8</accession>
<protein>
    <recommendedName>
        <fullName evidence="1">Universal stress protein B</fullName>
    </recommendedName>
</protein>
<feature type="chain" id="PRO_1000149878" description="Universal stress protein B">
    <location>
        <begin position="1"/>
        <end position="111"/>
    </location>
</feature>
<feature type="transmembrane region" description="Helical" evidence="1">
    <location>
        <begin position="1"/>
        <end position="21"/>
    </location>
</feature>
<feature type="transmembrane region" description="Helical" evidence="1">
    <location>
        <begin position="90"/>
        <end position="110"/>
    </location>
</feature>
<proteinExistence type="inferred from homology"/>
<dbReference type="EMBL" id="CU928162">
    <property type="protein sequence ID" value="CAR10298.2"/>
    <property type="molecule type" value="Genomic_DNA"/>
</dbReference>
<dbReference type="RefSeq" id="WP_000626187.1">
    <property type="nucleotide sequence ID" value="NC_011745.1"/>
</dbReference>
<dbReference type="SMR" id="B7N1S8"/>
<dbReference type="GeneID" id="93778499"/>
<dbReference type="KEGG" id="ecq:ECED1_4163"/>
<dbReference type="HOGENOM" id="CLU_151816_0_0_6"/>
<dbReference type="Proteomes" id="UP000000748">
    <property type="component" value="Chromosome"/>
</dbReference>
<dbReference type="GO" id="GO:0005886">
    <property type="term" value="C:plasma membrane"/>
    <property type="evidence" value="ECO:0007669"/>
    <property type="project" value="UniProtKB-SubCell"/>
</dbReference>
<dbReference type="HAMAP" id="MF_01088">
    <property type="entry name" value="UspB"/>
    <property type="match status" value="1"/>
</dbReference>
<dbReference type="InterPro" id="IPR019598">
    <property type="entry name" value="Universal_stress_protein_B"/>
</dbReference>
<dbReference type="NCBIfam" id="NF003435">
    <property type="entry name" value="PRK04960.1"/>
    <property type="match status" value="1"/>
</dbReference>
<dbReference type="Pfam" id="PF10625">
    <property type="entry name" value="UspB"/>
    <property type="match status" value="1"/>
</dbReference>
<gene>
    <name evidence="1" type="primary">uspB</name>
    <name type="ordered locus">ECED1_4163</name>
</gene>
<reference key="1">
    <citation type="journal article" date="2009" name="PLoS Genet.">
        <title>Organised genome dynamics in the Escherichia coli species results in highly diverse adaptive paths.</title>
        <authorList>
            <person name="Touchon M."/>
            <person name="Hoede C."/>
            <person name="Tenaillon O."/>
            <person name="Barbe V."/>
            <person name="Baeriswyl S."/>
            <person name="Bidet P."/>
            <person name="Bingen E."/>
            <person name="Bonacorsi S."/>
            <person name="Bouchier C."/>
            <person name="Bouvet O."/>
            <person name="Calteau A."/>
            <person name="Chiapello H."/>
            <person name="Clermont O."/>
            <person name="Cruveiller S."/>
            <person name="Danchin A."/>
            <person name="Diard M."/>
            <person name="Dossat C."/>
            <person name="Karoui M.E."/>
            <person name="Frapy E."/>
            <person name="Garry L."/>
            <person name="Ghigo J.M."/>
            <person name="Gilles A.M."/>
            <person name="Johnson J."/>
            <person name="Le Bouguenec C."/>
            <person name="Lescat M."/>
            <person name="Mangenot S."/>
            <person name="Martinez-Jehanne V."/>
            <person name="Matic I."/>
            <person name="Nassif X."/>
            <person name="Oztas S."/>
            <person name="Petit M.A."/>
            <person name="Pichon C."/>
            <person name="Rouy Z."/>
            <person name="Ruf C.S."/>
            <person name="Schneider D."/>
            <person name="Tourret J."/>
            <person name="Vacherie B."/>
            <person name="Vallenet D."/>
            <person name="Medigue C."/>
            <person name="Rocha E.P.C."/>
            <person name="Denamur E."/>
        </authorList>
    </citation>
    <scope>NUCLEOTIDE SEQUENCE [LARGE SCALE GENOMIC DNA]</scope>
    <source>
        <strain>ED1a</strain>
    </source>
</reference>
<evidence type="ECO:0000255" key="1">
    <source>
        <dbReference type="HAMAP-Rule" id="MF_01088"/>
    </source>
</evidence>